<comment type="subcellular location">
    <subcellularLocation>
        <location>Plastid</location>
        <location>Chloroplast</location>
    </subcellularLocation>
</comment>
<comment type="similarity">
    <text evidence="1">Belongs to the bacterial ribosomal protein bL36 family.</text>
</comment>
<evidence type="ECO:0000255" key="1">
    <source>
        <dbReference type="HAMAP-Rule" id="MF_00251"/>
    </source>
</evidence>
<evidence type="ECO:0000305" key="2"/>
<name>RK36_SOYBN</name>
<proteinExistence type="inferred from homology"/>
<organism>
    <name type="scientific">Glycine max</name>
    <name type="common">Soybean</name>
    <name type="synonym">Glycine hispida</name>
    <dbReference type="NCBI Taxonomy" id="3847"/>
    <lineage>
        <taxon>Eukaryota</taxon>
        <taxon>Viridiplantae</taxon>
        <taxon>Streptophyta</taxon>
        <taxon>Embryophyta</taxon>
        <taxon>Tracheophyta</taxon>
        <taxon>Spermatophyta</taxon>
        <taxon>Magnoliopsida</taxon>
        <taxon>eudicotyledons</taxon>
        <taxon>Gunneridae</taxon>
        <taxon>Pentapetalae</taxon>
        <taxon>rosids</taxon>
        <taxon>fabids</taxon>
        <taxon>Fabales</taxon>
        <taxon>Fabaceae</taxon>
        <taxon>Papilionoideae</taxon>
        <taxon>50 kb inversion clade</taxon>
        <taxon>NPAAA clade</taxon>
        <taxon>indigoferoid/millettioid clade</taxon>
        <taxon>Phaseoleae</taxon>
        <taxon>Glycine</taxon>
        <taxon>Glycine subgen. Soja</taxon>
    </lineage>
</organism>
<reference key="1">
    <citation type="journal article" date="2001" name="Plant Cell">
        <title>Many parallel losses of infA from chloroplast DNA during angiosperm evolution with multiple independent transfers to the nucleus.</title>
        <authorList>
            <person name="Millen R.S."/>
            <person name="Olmstead R.G."/>
            <person name="Adams K.L."/>
            <person name="Palmer J.D."/>
            <person name="Lao N.T."/>
            <person name="Heggie L."/>
            <person name="Kavanagh T.A."/>
            <person name="Hibberd J.M."/>
            <person name="Gray J.C."/>
            <person name="Morden C.W."/>
            <person name="Calie P.J."/>
            <person name="Jermiin L.S."/>
            <person name="Wolfe K.H."/>
        </authorList>
    </citation>
    <scope>NUCLEOTIDE SEQUENCE [GENOMIC DNA]</scope>
</reference>
<reference key="2">
    <citation type="journal article" date="2005" name="Plant Mol. Biol.">
        <title>Complete chloroplast genome sequence of Glycine max and comparative analyses with other legume genomes.</title>
        <authorList>
            <person name="Saski C."/>
            <person name="Lee S.-B."/>
            <person name="Daniell H."/>
            <person name="Wood T.C."/>
            <person name="Tomkins J."/>
            <person name="Kim H.-G."/>
            <person name="Jansen R.K."/>
        </authorList>
    </citation>
    <scope>NUCLEOTIDE SEQUENCE [LARGE SCALE GENOMIC DNA]</scope>
    <source>
        <strain>cv. PI 437654</strain>
    </source>
</reference>
<feature type="chain" id="PRO_0000126345" description="Large ribosomal subunit protein bL36c">
    <location>
        <begin position="1"/>
        <end position="37"/>
    </location>
</feature>
<protein>
    <recommendedName>
        <fullName evidence="1">Large ribosomal subunit protein bL36c</fullName>
    </recommendedName>
    <alternativeName>
        <fullName evidence="2">50S ribosomal protein L36, chloroplastic</fullName>
    </alternativeName>
</protein>
<accession>Q7ICQ6</accession>
<accession>Q2PMQ1</accession>
<keyword id="KW-0150">Chloroplast</keyword>
<keyword id="KW-0934">Plastid</keyword>
<keyword id="KW-1185">Reference proteome</keyword>
<keyword id="KW-0687">Ribonucleoprotein</keyword>
<keyword id="KW-0689">Ribosomal protein</keyword>
<gene>
    <name evidence="1" type="primary">rpl36</name>
</gene>
<sequence>MKIRASVRKICEKCRLIRRRGRIIVICSNPRHKQRQG</sequence>
<geneLocation type="chloroplast"/>
<dbReference type="EMBL" id="AF347627">
    <property type="protein sequence ID" value="AAK38854.1"/>
    <property type="molecule type" value="Genomic_DNA"/>
</dbReference>
<dbReference type="EMBL" id="DQ317523">
    <property type="protein sequence ID" value="ABC25157.1"/>
    <property type="molecule type" value="Genomic_DNA"/>
</dbReference>
<dbReference type="RefSeq" id="YP_538799.1">
    <property type="nucleotide sequence ID" value="NC_007942.1"/>
</dbReference>
<dbReference type="SMR" id="Q7ICQ6"/>
<dbReference type="FunCoup" id="Q7ICQ6">
    <property type="interactions" value="82"/>
</dbReference>
<dbReference type="STRING" id="3847.Q7ICQ6"/>
<dbReference type="GeneID" id="3989331"/>
<dbReference type="KEGG" id="gmx:3989331"/>
<dbReference type="InParanoid" id="Q7ICQ6"/>
<dbReference type="Proteomes" id="UP000008827">
    <property type="component" value="Chloroplast"/>
</dbReference>
<dbReference type="GO" id="GO:0009507">
    <property type="term" value="C:chloroplast"/>
    <property type="evidence" value="ECO:0007669"/>
    <property type="project" value="UniProtKB-SubCell"/>
</dbReference>
<dbReference type="GO" id="GO:1990904">
    <property type="term" value="C:ribonucleoprotein complex"/>
    <property type="evidence" value="ECO:0007669"/>
    <property type="project" value="UniProtKB-KW"/>
</dbReference>
<dbReference type="GO" id="GO:0005840">
    <property type="term" value="C:ribosome"/>
    <property type="evidence" value="ECO:0007669"/>
    <property type="project" value="UniProtKB-KW"/>
</dbReference>
<dbReference type="GO" id="GO:0003735">
    <property type="term" value="F:structural constituent of ribosome"/>
    <property type="evidence" value="ECO:0007669"/>
    <property type="project" value="InterPro"/>
</dbReference>
<dbReference type="GO" id="GO:0006412">
    <property type="term" value="P:translation"/>
    <property type="evidence" value="ECO:0007669"/>
    <property type="project" value="UniProtKB-UniRule"/>
</dbReference>
<dbReference type="HAMAP" id="MF_00251">
    <property type="entry name" value="Ribosomal_bL36"/>
    <property type="match status" value="1"/>
</dbReference>
<dbReference type="InterPro" id="IPR000473">
    <property type="entry name" value="Ribosomal_bL36"/>
</dbReference>
<dbReference type="InterPro" id="IPR035977">
    <property type="entry name" value="Ribosomal_bL36_sp"/>
</dbReference>
<dbReference type="NCBIfam" id="TIGR01022">
    <property type="entry name" value="rpmJ_bact"/>
    <property type="match status" value="1"/>
</dbReference>
<dbReference type="PANTHER" id="PTHR42888">
    <property type="entry name" value="50S RIBOSOMAL PROTEIN L36, CHLOROPLASTIC"/>
    <property type="match status" value="1"/>
</dbReference>
<dbReference type="PANTHER" id="PTHR42888:SF1">
    <property type="entry name" value="LARGE RIBOSOMAL SUBUNIT PROTEIN BL36C"/>
    <property type="match status" value="1"/>
</dbReference>
<dbReference type="Pfam" id="PF00444">
    <property type="entry name" value="Ribosomal_L36"/>
    <property type="match status" value="1"/>
</dbReference>
<dbReference type="SUPFAM" id="SSF57840">
    <property type="entry name" value="Ribosomal protein L36"/>
    <property type="match status" value="1"/>
</dbReference>
<dbReference type="PROSITE" id="PS00828">
    <property type="entry name" value="RIBOSOMAL_L36"/>
    <property type="match status" value="1"/>
</dbReference>